<evidence type="ECO:0000250" key="1">
    <source>
        <dbReference type="UniProtKB" id="P68363"/>
    </source>
</evidence>
<evidence type="ECO:0000250" key="2">
    <source>
        <dbReference type="UniProtKB" id="Q13509"/>
    </source>
</evidence>
<evidence type="ECO:0000305" key="3"/>
<gene>
    <name type="primary">TUB2</name>
</gene>
<organism>
    <name type="scientific">Ajellomyces capsulatus</name>
    <name type="common">Darling's disease fungus</name>
    <name type="synonym">Histoplasma capsulatum</name>
    <dbReference type="NCBI Taxonomy" id="5037"/>
    <lineage>
        <taxon>Eukaryota</taxon>
        <taxon>Fungi</taxon>
        <taxon>Dikarya</taxon>
        <taxon>Ascomycota</taxon>
        <taxon>Pezizomycotina</taxon>
        <taxon>Eurotiomycetes</taxon>
        <taxon>Eurotiomycetidae</taxon>
        <taxon>Onygenales</taxon>
        <taxon>Ajellomycetaceae</taxon>
        <taxon>Histoplasma</taxon>
    </lineage>
</organism>
<sequence length="445" mass="50176">MREIVHLQTGQCGNQIGAAFWQTISGEHGVDGAGYYNGSLDIQLERMNVYFNEAAEKKYVPRAVLVDLEPGTMDSVRAGPFGQLFRPDNFVFVQSGAGNTWAKGHYTEGSELVDQVIDVVRREAERCDCLQGFQIIHSLGGGTGAGMGTLLISKIREEFPDRMMATFSSVVPSPKVSDTVVEPYNATLSNHQLVENSDETFCIDNEALYDICMRTLKLSEPSYGDLNHLVSAVMSGVTTCLRFPGQLNSDLRKLAVNMVPFPRLHFFMVGFAPLTSRGAYSFRVVTVPELTQKMYDPKNMMCLLDFRNGRYLTASAIFRGKVSMKEVEDQMRNVQNKNHTYFVEWIPNNVQTALCSIPPRGLKMSSTFVENSTAIQELFKRVGDQFTAMFRRKAFLHWYTGEGMDEMEFTEAESNMNDLVSEYQQYQDASISEGEDEYFDYAWAM</sequence>
<feature type="chain" id="PRO_0000048392" description="Tubulin beta chain">
    <location>
        <begin position="1"/>
        <end position="445"/>
    </location>
</feature>
<feature type="binding site" evidence="2">
    <location>
        <position position="11"/>
    </location>
    <ligand>
        <name>GTP</name>
        <dbReference type="ChEBI" id="CHEBI:37565"/>
    </ligand>
</feature>
<feature type="binding site" evidence="1">
    <location>
        <position position="69"/>
    </location>
    <ligand>
        <name>GTP</name>
        <dbReference type="ChEBI" id="CHEBI:37565"/>
    </ligand>
</feature>
<feature type="binding site" evidence="1">
    <location>
        <position position="69"/>
    </location>
    <ligand>
        <name>Mg(2+)</name>
        <dbReference type="ChEBI" id="CHEBI:18420"/>
    </ligand>
</feature>
<feature type="binding site" evidence="2">
    <location>
        <position position="138"/>
    </location>
    <ligand>
        <name>GTP</name>
        <dbReference type="ChEBI" id="CHEBI:37565"/>
    </ligand>
</feature>
<feature type="binding site" evidence="2">
    <location>
        <position position="142"/>
    </location>
    <ligand>
        <name>GTP</name>
        <dbReference type="ChEBI" id="CHEBI:37565"/>
    </ligand>
</feature>
<feature type="binding site" evidence="2">
    <location>
        <position position="143"/>
    </location>
    <ligand>
        <name>GTP</name>
        <dbReference type="ChEBI" id="CHEBI:37565"/>
    </ligand>
</feature>
<feature type="binding site" evidence="2">
    <location>
        <position position="144"/>
    </location>
    <ligand>
        <name>GTP</name>
        <dbReference type="ChEBI" id="CHEBI:37565"/>
    </ligand>
</feature>
<feature type="binding site" evidence="2">
    <location>
        <position position="205"/>
    </location>
    <ligand>
        <name>GTP</name>
        <dbReference type="ChEBI" id="CHEBI:37565"/>
    </ligand>
</feature>
<feature type="binding site" evidence="2">
    <location>
        <position position="227"/>
    </location>
    <ligand>
        <name>GTP</name>
        <dbReference type="ChEBI" id="CHEBI:37565"/>
    </ligand>
</feature>
<reference key="1">
    <citation type="journal article" date="1989" name="J. Gen. Microbiol.">
        <title>Characterization of alpha and beta tubulin genes in the dimorphic fungus Histoplasma capsulatum.</title>
        <authorList>
            <person name="Harris G.S."/>
            <person name="Keath E.J."/>
            <person name="Medoff J."/>
        </authorList>
    </citation>
    <scope>NUCLEOTIDE SEQUENCE [GENOMIC DNA]</scope>
    <source>
        <strain>ATCC 26032 / G217B</strain>
    </source>
</reference>
<comment type="function">
    <text>Tubulin is the major constituent of microtubules, a cylinder consisting of laterally associated linear protofilaments composed of alpha- and beta-tubulin heterodimers. Microtubules grow by the addition of GTP-tubulin dimers to the microtubule end, where a stabilizing cap forms. Below the cap, tubulin dimers are in GDP-bound state, owing to GTPase activity of alpha-tubulin.</text>
</comment>
<comment type="cofactor">
    <cofactor evidence="1">
        <name>Mg(2+)</name>
        <dbReference type="ChEBI" id="CHEBI:18420"/>
    </cofactor>
</comment>
<comment type="subunit">
    <text>Dimer of alpha and beta chains. A typical microtubule is a hollow water-filled tube with an outer diameter of 25 nm and an inner diameter of 15 nM. Alpha-beta heterodimers associate head-to-tail to form protofilaments running lengthwise along the microtubule wall with the beta-tubulin subunit facing the microtubule plus end conferring a structural polarity. Microtubules usually have 13 protofilaments but different protofilament numbers can be found in some organisms and specialized cells.</text>
</comment>
<comment type="subcellular location">
    <subcellularLocation>
        <location>Cytoplasm</location>
        <location>Cytoskeleton</location>
    </subcellularLocation>
</comment>
<comment type="similarity">
    <text evidence="3">Belongs to the tubulin family.</text>
</comment>
<name>TBB_AJECA</name>
<dbReference type="EMBL" id="AH003038">
    <property type="protein sequence ID" value="AAA61689.1"/>
    <property type="molecule type" value="Genomic_DNA"/>
</dbReference>
<dbReference type="PIR" id="B45794">
    <property type="entry name" value="B45794"/>
</dbReference>
<dbReference type="SMR" id="P41742"/>
<dbReference type="GO" id="GO:0005737">
    <property type="term" value="C:cytoplasm"/>
    <property type="evidence" value="ECO:0007669"/>
    <property type="project" value="UniProtKB-KW"/>
</dbReference>
<dbReference type="GO" id="GO:0005874">
    <property type="term" value="C:microtubule"/>
    <property type="evidence" value="ECO:0007669"/>
    <property type="project" value="UniProtKB-KW"/>
</dbReference>
<dbReference type="GO" id="GO:0005525">
    <property type="term" value="F:GTP binding"/>
    <property type="evidence" value="ECO:0007669"/>
    <property type="project" value="UniProtKB-KW"/>
</dbReference>
<dbReference type="GO" id="GO:0003924">
    <property type="term" value="F:GTPase activity"/>
    <property type="evidence" value="ECO:0007669"/>
    <property type="project" value="InterPro"/>
</dbReference>
<dbReference type="GO" id="GO:0046872">
    <property type="term" value="F:metal ion binding"/>
    <property type="evidence" value="ECO:0007669"/>
    <property type="project" value="UniProtKB-KW"/>
</dbReference>
<dbReference type="GO" id="GO:0005200">
    <property type="term" value="F:structural constituent of cytoskeleton"/>
    <property type="evidence" value="ECO:0007669"/>
    <property type="project" value="InterPro"/>
</dbReference>
<dbReference type="GO" id="GO:0007017">
    <property type="term" value="P:microtubule-based process"/>
    <property type="evidence" value="ECO:0007669"/>
    <property type="project" value="InterPro"/>
</dbReference>
<dbReference type="CDD" id="cd02187">
    <property type="entry name" value="beta_tubulin"/>
    <property type="match status" value="1"/>
</dbReference>
<dbReference type="FunFam" id="1.10.287.600:FF:000003">
    <property type="entry name" value="Tubulin beta chain"/>
    <property type="match status" value="1"/>
</dbReference>
<dbReference type="FunFam" id="3.30.1330.20:FF:000002">
    <property type="entry name" value="Tubulin beta chain"/>
    <property type="match status" value="1"/>
</dbReference>
<dbReference type="FunFam" id="3.40.50.1440:FF:000009">
    <property type="entry name" value="Tubulin beta chain"/>
    <property type="match status" value="1"/>
</dbReference>
<dbReference type="Gene3D" id="1.10.287.600">
    <property type="entry name" value="Helix hairpin bin"/>
    <property type="match status" value="1"/>
</dbReference>
<dbReference type="Gene3D" id="3.30.1330.20">
    <property type="entry name" value="Tubulin/FtsZ, C-terminal domain"/>
    <property type="match status" value="1"/>
</dbReference>
<dbReference type="Gene3D" id="3.40.50.1440">
    <property type="entry name" value="Tubulin/FtsZ, GTPase domain"/>
    <property type="match status" value="1"/>
</dbReference>
<dbReference type="InterPro" id="IPR013838">
    <property type="entry name" value="Beta-tubulin_BS"/>
</dbReference>
<dbReference type="InterPro" id="IPR002453">
    <property type="entry name" value="Beta_tubulin"/>
</dbReference>
<dbReference type="InterPro" id="IPR008280">
    <property type="entry name" value="Tub_FtsZ_C"/>
</dbReference>
<dbReference type="InterPro" id="IPR000217">
    <property type="entry name" value="Tubulin"/>
</dbReference>
<dbReference type="InterPro" id="IPR037103">
    <property type="entry name" value="Tubulin/FtsZ-like_C"/>
</dbReference>
<dbReference type="InterPro" id="IPR018316">
    <property type="entry name" value="Tubulin/FtsZ_2-layer-sand-dom"/>
</dbReference>
<dbReference type="InterPro" id="IPR036525">
    <property type="entry name" value="Tubulin/FtsZ_GTPase_sf"/>
</dbReference>
<dbReference type="InterPro" id="IPR023123">
    <property type="entry name" value="Tubulin_C"/>
</dbReference>
<dbReference type="InterPro" id="IPR017975">
    <property type="entry name" value="Tubulin_CS"/>
</dbReference>
<dbReference type="InterPro" id="IPR003008">
    <property type="entry name" value="Tubulin_FtsZ_GTPase"/>
</dbReference>
<dbReference type="PANTHER" id="PTHR11588">
    <property type="entry name" value="TUBULIN"/>
    <property type="match status" value="1"/>
</dbReference>
<dbReference type="Pfam" id="PF00091">
    <property type="entry name" value="Tubulin"/>
    <property type="match status" value="1"/>
</dbReference>
<dbReference type="Pfam" id="PF03953">
    <property type="entry name" value="Tubulin_C"/>
    <property type="match status" value="1"/>
</dbReference>
<dbReference type="PRINTS" id="PR01163">
    <property type="entry name" value="BETATUBULIN"/>
</dbReference>
<dbReference type="PRINTS" id="PR01161">
    <property type="entry name" value="TUBULIN"/>
</dbReference>
<dbReference type="SMART" id="SM00864">
    <property type="entry name" value="Tubulin"/>
    <property type="match status" value="1"/>
</dbReference>
<dbReference type="SMART" id="SM00865">
    <property type="entry name" value="Tubulin_C"/>
    <property type="match status" value="1"/>
</dbReference>
<dbReference type="SUPFAM" id="SSF55307">
    <property type="entry name" value="Tubulin C-terminal domain-like"/>
    <property type="match status" value="1"/>
</dbReference>
<dbReference type="SUPFAM" id="SSF52490">
    <property type="entry name" value="Tubulin nucleotide-binding domain-like"/>
    <property type="match status" value="1"/>
</dbReference>
<dbReference type="PROSITE" id="PS00227">
    <property type="entry name" value="TUBULIN"/>
    <property type="match status" value="1"/>
</dbReference>
<dbReference type="PROSITE" id="PS00228">
    <property type="entry name" value="TUBULIN_B_AUTOREG"/>
    <property type="match status" value="1"/>
</dbReference>
<keyword id="KW-0963">Cytoplasm</keyword>
<keyword id="KW-0206">Cytoskeleton</keyword>
<keyword id="KW-0342">GTP-binding</keyword>
<keyword id="KW-0460">Magnesium</keyword>
<keyword id="KW-0479">Metal-binding</keyword>
<keyword id="KW-0493">Microtubule</keyword>
<keyword id="KW-0547">Nucleotide-binding</keyword>
<proteinExistence type="inferred from homology"/>
<accession>P41742</accession>
<protein>
    <recommendedName>
        <fullName>Tubulin beta chain</fullName>
    </recommendedName>
    <alternativeName>
        <fullName>Beta-tubulin</fullName>
    </alternativeName>
</protein>